<name>KAD_VIBVY</name>
<gene>
    <name evidence="1" type="primary">adk</name>
    <name type="ordered locus">VV1002</name>
</gene>
<evidence type="ECO:0000255" key="1">
    <source>
        <dbReference type="HAMAP-Rule" id="MF_00235"/>
    </source>
</evidence>
<keyword id="KW-0067">ATP-binding</keyword>
<keyword id="KW-0963">Cytoplasm</keyword>
<keyword id="KW-0418">Kinase</keyword>
<keyword id="KW-0545">Nucleotide biosynthesis</keyword>
<keyword id="KW-0547">Nucleotide-binding</keyword>
<keyword id="KW-0808">Transferase</keyword>
<protein>
    <recommendedName>
        <fullName evidence="1">Adenylate kinase</fullName>
        <shortName evidence="1">AK</shortName>
        <ecNumber evidence="1">2.7.4.3</ecNumber>
    </recommendedName>
    <alternativeName>
        <fullName evidence="1">ATP-AMP transphosphorylase</fullName>
    </alternativeName>
    <alternativeName>
        <fullName evidence="1">ATP:AMP phosphotransferase</fullName>
    </alternativeName>
    <alternativeName>
        <fullName evidence="1">Adenylate monophosphate kinase</fullName>
    </alternativeName>
</protein>
<feature type="chain" id="PRO_0000158885" description="Adenylate kinase">
    <location>
        <begin position="1"/>
        <end position="214"/>
    </location>
</feature>
<feature type="region of interest" description="NMP" evidence="1">
    <location>
        <begin position="30"/>
        <end position="59"/>
    </location>
</feature>
<feature type="region of interest" description="LID" evidence="1">
    <location>
        <begin position="122"/>
        <end position="159"/>
    </location>
</feature>
<feature type="binding site" evidence="1">
    <location>
        <begin position="10"/>
        <end position="15"/>
    </location>
    <ligand>
        <name>ATP</name>
        <dbReference type="ChEBI" id="CHEBI:30616"/>
    </ligand>
</feature>
<feature type="binding site" evidence="1">
    <location>
        <position position="31"/>
    </location>
    <ligand>
        <name>AMP</name>
        <dbReference type="ChEBI" id="CHEBI:456215"/>
    </ligand>
</feature>
<feature type="binding site" evidence="1">
    <location>
        <position position="36"/>
    </location>
    <ligand>
        <name>AMP</name>
        <dbReference type="ChEBI" id="CHEBI:456215"/>
    </ligand>
</feature>
<feature type="binding site" evidence="1">
    <location>
        <begin position="57"/>
        <end position="59"/>
    </location>
    <ligand>
        <name>AMP</name>
        <dbReference type="ChEBI" id="CHEBI:456215"/>
    </ligand>
</feature>
<feature type="binding site" evidence="1">
    <location>
        <begin position="85"/>
        <end position="88"/>
    </location>
    <ligand>
        <name>AMP</name>
        <dbReference type="ChEBI" id="CHEBI:456215"/>
    </ligand>
</feature>
<feature type="binding site" evidence="1">
    <location>
        <position position="92"/>
    </location>
    <ligand>
        <name>AMP</name>
        <dbReference type="ChEBI" id="CHEBI:456215"/>
    </ligand>
</feature>
<feature type="binding site" evidence="1">
    <location>
        <position position="123"/>
    </location>
    <ligand>
        <name>ATP</name>
        <dbReference type="ChEBI" id="CHEBI:30616"/>
    </ligand>
</feature>
<feature type="binding site" evidence="1">
    <location>
        <begin position="132"/>
        <end position="133"/>
    </location>
    <ligand>
        <name>ATP</name>
        <dbReference type="ChEBI" id="CHEBI:30616"/>
    </ligand>
</feature>
<feature type="binding site" evidence="1">
    <location>
        <position position="156"/>
    </location>
    <ligand>
        <name>AMP</name>
        <dbReference type="ChEBI" id="CHEBI:456215"/>
    </ligand>
</feature>
<feature type="binding site" evidence="1">
    <location>
        <position position="167"/>
    </location>
    <ligand>
        <name>AMP</name>
        <dbReference type="ChEBI" id="CHEBI:456215"/>
    </ligand>
</feature>
<feature type="binding site" evidence="1">
    <location>
        <position position="200"/>
    </location>
    <ligand>
        <name>ATP</name>
        <dbReference type="ChEBI" id="CHEBI:30616"/>
    </ligand>
</feature>
<dbReference type="EC" id="2.7.4.3" evidence="1"/>
<dbReference type="EMBL" id="BA000037">
    <property type="protein sequence ID" value="BAC93766.1"/>
    <property type="molecule type" value="Genomic_DNA"/>
</dbReference>
<dbReference type="RefSeq" id="WP_011149776.1">
    <property type="nucleotide sequence ID" value="NC_005139.1"/>
</dbReference>
<dbReference type="SMR" id="Q7MMR5"/>
<dbReference type="STRING" id="672.VV93_v1c09260"/>
<dbReference type="KEGG" id="vvy:VV1002"/>
<dbReference type="PATRIC" id="fig|196600.6.peg.1000"/>
<dbReference type="eggNOG" id="COG0563">
    <property type="taxonomic scope" value="Bacteria"/>
</dbReference>
<dbReference type="HOGENOM" id="CLU_032354_1_2_6"/>
<dbReference type="UniPathway" id="UPA00588">
    <property type="reaction ID" value="UER00649"/>
</dbReference>
<dbReference type="Proteomes" id="UP000002675">
    <property type="component" value="Chromosome I"/>
</dbReference>
<dbReference type="GO" id="GO:0005737">
    <property type="term" value="C:cytoplasm"/>
    <property type="evidence" value="ECO:0007669"/>
    <property type="project" value="UniProtKB-SubCell"/>
</dbReference>
<dbReference type="GO" id="GO:0004017">
    <property type="term" value="F:adenylate kinase activity"/>
    <property type="evidence" value="ECO:0007669"/>
    <property type="project" value="UniProtKB-UniRule"/>
</dbReference>
<dbReference type="GO" id="GO:0005524">
    <property type="term" value="F:ATP binding"/>
    <property type="evidence" value="ECO:0007669"/>
    <property type="project" value="UniProtKB-UniRule"/>
</dbReference>
<dbReference type="GO" id="GO:0044209">
    <property type="term" value="P:AMP salvage"/>
    <property type="evidence" value="ECO:0007669"/>
    <property type="project" value="UniProtKB-UniRule"/>
</dbReference>
<dbReference type="CDD" id="cd01428">
    <property type="entry name" value="ADK"/>
    <property type="match status" value="1"/>
</dbReference>
<dbReference type="FunFam" id="3.40.50.300:FF:000106">
    <property type="entry name" value="Adenylate kinase mitochondrial"/>
    <property type="match status" value="1"/>
</dbReference>
<dbReference type="Gene3D" id="3.40.50.300">
    <property type="entry name" value="P-loop containing nucleotide triphosphate hydrolases"/>
    <property type="match status" value="1"/>
</dbReference>
<dbReference type="HAMAP" id="MF_00235">
    <property type="entry name" value="Adenylate_kinase_Adk"/>
    <property type="match status" value="1"/>
</dbReference>
<dbReference type="InterPro" id="IPR006259">
    <property type="entry name" value="Adenyl_kin_sub"/>
</dbReference>
<dbReference type="InterPro" id="IPR000850">
    <property type="entry name" value="Adenylat/UMP-CMP_kin"/>
</dbReference>
<dbReference type="InterPro" id="IPR033690">
    <property type="entry name" value="Adenylat_kinase_CS"/>
</dbReference>
<dbReference type="InterPro" id="IPR007862">
    <property type="entry name" value="Adenylate_kinase_lid-dom"/>
</dbReference>
<dbReference type="InterPro" id="IPR027417">
    <property type="entry name" value="P-loop_NTPase"/>
</dbReference>
<dbReference type="NCBIfam" id="TIGR01351">
    <property type="entry name" value="adk"/>
    <property type="match status" value="1"/>
</dbReference>
<dbReference type="NCBIfam" id="NF001379">
    <property type="entry name" value="PRK00279.1-1"/>
    <property type="match status" value="1"/>
</dbReference>
<dbReference type="NCBIfam" id="NF001380">
    <property type="entry name" value="PRK00279.1-2"/>
    <property type="match status" value="1"/>
</dbReference>
<dbReference type="NCBIfam" id="NF001381">
    <property type="entry name" value="PRK00279.1-3"/>
    <property type="match status" value="1"/>
</dbReference>
<dbReference type="PANTHER" id="PTHR23359">
    <property type="entry name" value="NUCLEOTIDE KINASE"/>
    <property type="match status" value="1"/>
</dbReference>
<dbReference type="Pfam" id="PF00406">
    <property type="entry name" value="ADK"/>
    <property type="match status" value="1"/>
</dbReference>
<dbReference type="Pfam" id="PF05191">
    <property type="entry name" value="ADK_lid"/>
    <property type="match status" value="1"/>
</dbReference>
<dbReference type="PRINTS" id="PR00094">
    <property type="entry name" value="ADENYLTKNASE"/>
</dbReference>
<dbReference type="SUPFAM" id="SSF52540">
    <property type="entry name" value="P-loop containing nucleoside triphosphate hydrolases"/>
    <property type="match status" value="1"/>
</dbReference>
<dbReference type="PROSITE" id="PS00113">
    <property type="entry name" value="ADENYLATE_KINASE"/>
    <property type="match status" value="1"/>
</dbReference>
<comment type="function">
    <text evidence="1">Catalyzes the reversible transfer of the terminal phosphate group between ATP and AMP. Plays an important role in cellular energy homeostasis and in adenine nucleotide metabolism.</text>
</comment>
<comment type="catalytic activity">
    <reaction evidence="1">
        <text>AMP + ATP = 2 ADP</text>
        <dbReference type="Rhea" id="RHEA:12973"/>
        <dbReference type="ChEBI" id="CHEBI:30616"/>
        <dbReference type="ChEBI" id="CHEBI:456215"/>
        <dbReference type="ChEBI" id="CHEBI:456216"/>
        <dbReference type="EC" id="2.7.4.3"/>
    </reaction>
</comment>
<comment type="pathway">
    <text evidence="1">Purine metabolism; AMP biosynthesis via salvage pathway; AMP from ADP: step 1/1.</text>
</comment>
<comment type="subunit">
    <text evidence="1">Monomer.</text>
</comment>
<comment type="subcellular location">
    <subcellularLocation>
        <location evidence="1">Cytoplasm</location>
    </subcellularLocation>
</comment>
<comment type="domain">
    <text evidence="1">Consists of three domains, a large central CORE domain and two small peripheral domains, NMPbind and LID, which undergo movements during catalysis. The LID domain closes over the site of phosphoryl transfer upon ATP binding. Assembling and dissambling the active center during each catalytic cycle provides an effective means to prevent ATP hydrolysis.</text>
</comment>
<comment type="similarity">
    <text evidence="1">Belongs to the adenylate kinase family.</text>
</comment>
<sequence length="214" mass="23266">MRIILLGAPGAGKGTQAQFIMEKYGIPQISTGDMLRAAIKAGTELGKQAKAVIDAGQLVSDEIILGLIKERIAQEDCAKGFLLDGFPRTIPQADGLKEMGVAVDYVIEFDVADDVIVERMAGRRAHLPSGRTYHVVYNPPKVEGKDDVTGEDLVVRDDDKEETVRARLGVYHSQTAPLIEYYGKEAAESNTKYLKFDGTKQVAQVSADIEKALA</sequence>
<proteinExistence type="inferred from homology"/>
<reference key="1">
    <citation type="journal article" date="2003" name="Genome Res.">
        <title>Comparative genome analysis of Vibrio vulnificus, a marine pathogen.</title>
        <authorList>
            <person name="Chen C.-Y."/>
            <person name="Wu K.-M."/>
            <person name="Chang Y.-C."/>
            <person name="Chang C.-H."/>
            <person name="Tsai H.-C."/>
            <person name="Liao T.-L."/>
            <person name="Liu Y.-M."/>
            <person name="Chen H.-J."/>
            <person name="Shen A.B.-T."/>
            <person name="Li J.-C."/>
            <person name="Su T.-L."/>
            <person name="Shao C.-P."/>
            <person name="Lee C.-T."/>
            <person name="Hor L.-I."/>
            <person name="Tsai S.-F."/>
        </authorList>
    </citation>
    <scope>NUCLEOTIDE SEQUENCE [LARGE SCALE GENOMIC DNA]</scope>
    <source>
        <strain>YJ016</strain>
    </source>
</reference>
<accession>Q7MMR5</accession>
<organism>
    <name type="scientific">Vibrio vulnificus (strain YJ016)</name>
    <dbReference type="NCBI Taxonomy" id="196600"/>
    <lineage>
        <taxon>Bacteria</taxon>
        <taxon>Pseudomonadati</taxon>
        <taxon>Pseudomonadota</taxon>
        <taxon>Gammaproteobacteria</taxon>
        <taxon>Vibrionales</taxon>
        <taxon>Vibrionaceae</taxon>
        <taxon>Vibrio</taxon>
    </lineage>
</organism>